<comment type="function">
    <text evidence="4 5">Sperm-specific solute carrier involved in intracellular pH regulation of spermatozoa. Required for sperm motility and fertility. Involved in sperm cell hyperactivation, a step needed for sperm motility which is essential late in the preparation of sperm for fertilization. Required for the expression and bicarbonate regulation of the soluble adenylyl cyclase (sAC).</text>
</comment>
<comment type="subunit">
    <text evidence="5">Interacts with soluble adenylyl cyclase (sAC).</text>
</comment>
<comment type="interaction">
    <interactant intactId="EBI-15639080">
        <id>Q6UJY2</id>
    </interactant>
    <interactant intactId="EBI-15639026">
        <id>Q8C0T9</id>
        <label>Adcy10</label>
    </interactant>
    <organismsDiffer>false</organismsDiffer>
    <experiments>2</experiments>
</comment>
<comment type="subcellular location">
    <subcellularLocation>
        <location evidence="4">Cell projection</location>
        <location evidence="4">Cilium</location>
        <location evidence="4">Flagellum membrane</location>
        <topology evidence="2">Multi-pass membrane protein</topology>
    </subcellularLocation>
</comment>
<comment type="tissue specificity">
    <text evidence="4">Testis-specific. Specifically present in the principal piece of sperm tail (at protein level).</text>
</comment>
<comment type="domain">
    <text>The ion transport-like region is related to the membrane segments of voltage-gated ion channels. Its function is unknown.</text>
</comment>
<comment type="disruption phenotype">
    <text evidence="4">Mice are normal but males are sterile. Male sterility is due to defects in sperm motility inability to fertilize intact eggs. Moreover, spermatozoa fail to develop the cAMP-dependent protein tyrosine phosphorylation that coincides with the functional maturation occurring upon incubation in capacitating conditions in vitro. cAMP analogs almost completely rescue the motility and infertility phenotypes.</text>
</comment>
<comment type="similarity">
    <text evidence="7">Belongs to the monovalent cation:proton antiporter 1 (CPA1) transporter (TC 2.A.36) family.</text>
</comment>
<comment type="caution">
    <text evidence="6">The transport mechanisms that drive proton efflux in sperm appear to be species-specific. While sea urchin SLC9C1 ortholog functions as a voltage-gated and cAMP-sensitive sodium:proton exchanger that dominantly regulates proton efflux in sperm, no such transporter activity is observed for human SLC9C1. Consistently, functionally conserved residues in the transport, voltage sensor and cyclic nucleotide-binding domains present in sea urchin SLC9C1 are missing in mammalian SLC9C1, suggesting alternative transport mechanisms between species. The transport activity of SLC9C1 remains to be elucidated.</text>
</comment>
<comment type="sequence caution" evidence="7">
    <conflict type="frameshift">
        <sequence resource="EMBL-CDS" id="AAQ88278"/>
    </conflict>
</comment>
<comment type="sequence caution" evidence="7">
    <conflict type="erroneous gene model prediction">
        <sequence resource="EMBL-CDS" id="DAA01464"/>
    </conflict>
</comment>
<keyword id="KW-0050">Antiport</keyword>
<keyword id="KW-1003">Cell membrane</keyword>
<keyword id="KW-0966">Cell projection</keyword>
<keyword id="KW-0969">Cilium</keyword>
<keyword id="KW-0217">Developmental protein</keyword>
<keyword id="KW-0221">Differentiation</keyword>
<keyword id="KW-0282">Flagellum</keyword>
<keyword id="KW-0406">Ion transport</keyword>
<keyword id="KW-0472">Membrane</keyword>
<keyword id="KW-1185">Reference proteome</keyword>
<keyword id="KW-0915">Sodium</keyword>
<keyword id="KW-0739">Sodium transport</keyword>
<keyword id="KW-0744">Spermatogenesis</keyword>
<keyword id="KW-0812">Transmembrane</keyword>
<keyword id="KW-1133">Transmembrane helix</keyword>
<keyword id="KW-0813">Transport</keyword>
<dbReference type="EMBL" id="AY368685">
    <property type="protein sequence ID" value="AAQ88278.1"/>
    <property type="status" value="ALT_FRAME"/>
    <property type="molecule type" value="mRNA"/>
</dbReference>
<dbReference type="EMBL" id="AC124636">
    <property type="status" value="NOT_ANNOTATED_CDS"/>
    <property type="molecule type" value="Genomic_DNA"/>
</dbReference>
<dbReference type="EMBL" id="BK001330">
    <property type="protein sequence ID" value="DAA01464.1"/>
    <property type="status" value="ALT_SEQ"/>
    <property type="molecule type" value="mRNA"/>
</dbReference>
<dbReference type="CCDS" id="CCDS28198.2"/>
<dbReference type="RefSeq" id="NP_932774.3">
    <property type="nucleotide sequence ID" value="NM_198106.4"/>
</dbReference>
<dbReference type="SMR" id="Q6UJY2"/>
<dbReference type="DIP" id="DIP-60951N"/>
<dbReference type="FunCoup" id="Q6UJY2">
    <property type="interactions" value="29"/>
</dbReference>
<dbReference type="IntAct" id="Q6UJY2">
    <property type="interactions" value="1"/>
</dbReference>
<dbReference type="STRING" id="10090.ENSMUSP00000124969"/>
<dbReference type="TCDB" id="2.A.36.7.7">
    <property type="family name" value="the monovalent cation:proton antiporter-1 (cpa1) family"/>
</dbReference>
<dbReference type="GlyCosmos" id="Q6UJY2">
    <property type="glycosylation" value="1 site, No reported glycans"/>
</dbReference>
<dbReference type="iPTMnet" id="Q6UJY2"/>
<dbReference type="PhosphoSitePlus" id="Q6UJY2"/>
<dbReference type="jPOST" id="Q6UJY2"/>
<dbReference type="PaxDb" id="10090-ENSMUSP00000124969"/>
<dbReference type="Antibodypedia" id="52176">
    <property type="antibodies" value="22 antibodies from 14 providers"/>
</dbReference>
<dbReference type="DNASU" id="208169"/>
<dbReference type="Ensembl" id="ENSMUST00000159945.8">
    <property type="protein sequence ID" value="ENSMUSP00000124969.2"/>
    <property type="gene ID" value="ENSMUSG00000033210.17"/>
</dbReference>
<dbReference type="GeneID" id="208169"/>
<dbReference type="KEGG" id="mmu:208169"/>
<dbReference type="UCSC" id="uc007ziq.2">
    <property type="organism name" value="mouse"/>
</dbReference>
<dbReference type="AGR" id="MGI:2685456"/>
<dbReference type="CTD" id="285335"/>
<dbReference type="MGI" id="MGI:2685456">
    <property type="gene designation" value="Slc9c1"/>
</dbReference>
<dbReference type="VEuPathDB" id="HostDB:ENSMUSG00000033210"/>
<dbReference type="eggNOG" id="KOG1965">
    <property type="taxonomic scope" value="Eukaryota"/>
</dbReference>
<dbReference type="GeneTree" id="ENSGT00940000162055"/>
<dbReference type="HOGENOM" id="CLU_003400_1_0_1"/>
<dbReference type="InParanoid" id="Q6UJY2"/>
<dbReference type="OMA" id="RVVTFDC"/>
<dbReference type="OrthoDB" id="441412at2759"/>
<dbReference type="PhylomeDB" id="Q6UJY2"/>
<dbReference type="TreeFam" id="TF328865"/>
<dbReference type="BioGRID-ORCS" id="208169">
    <property type="hits" value="3 hits in 78 CRISPR screens"/>
</dbReference>
<dbReference type="ChiTaRS" id="Slc9c1">
    <property type="organism name" value="mouse"/>
</dbReference>
<dbReference type="PRO" id="PR:Q6UJY2"/>
<dbReference type="Proteomes" id="UP000000589">
    <property type="component" value="Chromosome 16"/>
</dbReference>
<dbReference type="RNAct" id="Q6UJY2">
    <property type="molecule type" value="protein"/>
</dbReference>
<dbReference type="Bgee" id="ENSMUSG00000033210">
    <property type="expression patterns" value="Expressed in spermatocyte and 3 other cell types or tissues"/>
</dbReference>
<dbReference type="ExpressionAtlas" id="Q6UJY2">
    <property type="expression patterns" value="baseline and differential"/>
</dbReference>
<dbReference type="GO" id="GO:0060170">
    <property type="term" value="C:ciliary membrane"/>
    <property type="evidence" value="ECO:0000304"/>
    <property type="project" value="Reactome"/>
</dbReference>
<dbReference type="GO" id="GO:0031514">
    <property type="term" value="C:motile cilium"/>
    <property type="evidence" value="ECO:0000314"/>
    <property type="project" value="MGI"/>
</dbReference>
<dbReference type="GO" id="GO:0005216">
    <property type="term" value="F:monoatomic ion channel activity"/>
    <property type="evidence" value="ECO:0007669"/>
    <property type="project" value="InterPro"/>
</dbReference>
<dbReference type="GO" id="GO:0015385">
    <property type="term" value="F:sodium:proton antiporter activity"/>
    <property type="evidence" value="ECO:0000304"/>
    <property type="project" value="Reactome"/>
</dbReference>
<dbReference type="GO" id="GO:0030154">
    <property type="term" value="P:cell differentiation"/>
    <property type="evidence" value="ECO:0007669"/>
    <property type="project" value="UniProtKB-KW"/>
</dbReference>
<dbReference type="GO" id="GO:0030317">
    <property type="term" value="P:flagellated sperm motility"/>
    <property type="evidence" value="ECO:0000315"/>
    <property type="project" value="MGI"/>
</dbReference>
<dbReference type="GO" id="GO:0007283">
    <property type="term" value="P:spermatogenesis"/>
    <property type="evidence" value="ECO:0007669"/>
    <property type="project" value="UniProtKB-KW"/>
</dbReference>
<dbReference type="CDD" id="cd00038">
    <property type="entry name" value="CAP_ED"/>
    <property type="match status" value="1"/>
</dbReference>
<dbReference type="FunFam" id="1.20.120.350:FF:000050">
    <property type="entry name" value="Solute carrier family 9 member C1"/>
    <property type="match status" value="1"/>
</dbReference>
<dbReference type="FunFam" id="2.60.120.10:FF:000067">
    <property type="entry name" value="Solute carrier family 9 member C1"/>
    <property type="match status" value="1"/>
</dbReference>
<dbReference type="Gene3D" id="2.60.120.10">
    <property type="entry name" value="Jelly Rolls"/>
    <property type="match status" value="1"/>
</dbReference>
<dbReference type="Gene3D" id="1.20.120.350">
    <property type="entry name" value="Voltage-gated potassium channels. Chain C"/>
    <property type="match status" value="1"/>
</dbReference>
<dbReference type="InterPro" id="IPR018422">
    <property type="entry name" value="Cation/H_exchanger_CPA1"/>
</dbReference>
<dbReference type="InterPro" id="IPR006153">
    <property type="entry name" value="Cation/H_exchanger_TM"/>
</dbReference>
<dbReference type="InterPro" id="IPR000595">
    <property type="entry name" value="cNMP-bd_dom"/>
</dbReference>
<dbReference type="InterPro" id="IPR018490">
    <property type="entry name" value="cNMP-bd_dom_sf"/>
</dbReference>
<dbReference type="InterPro" id="IPR005821">
    <property type="entry name" value="Ion_trans_dom"/>
</dbReference>
<dbReference type="InterPro" id="IPR014710">
    <property type="entry name" value="RmlC-like_jellyroll"/>
</dbReference>
<dbReference type="InterPro" id="IPR027359">
    <property type="entry name" value="Volt_channel_dom_sf"/>
</dbReference>
<dbReference type="PANTHER" id="PTHR10110">
    <property type="entry name" value="SODIUM/HYDROGEN EXCHANGER"/>
    <property type="match status" value="1"/>
</dbReference>
<dbReference type="PANTHER" id="PTHR10110:SF87">
    <property type="entry name" value="SODIUM_HYDROGEN EXCHANGER 10"/>
    <property type="match status" value="1"/>
</dbReference>
<dbReference type="Pfam" id="PF00027">
    <property type="entry name" value="cNMP_binding"/>
    <property type="match status" value="1"/>
</dbReference>
<dbReference type="Pfam" id="PF00520">
    <property type="entry name" value="Ion_trans"/>
    <property type="match status" value="1"/>
</dbReference>
<dbReference type="Pfam" id="PF00999">
    <property type="entry name" value="Na_H_Exchanger"/>
    <property type="match status" value="1"/>
</dbReference>
<dbReference type="SUPFAM" id="SSF51206">
    <property type="entry name" value="cAMP-binding domain-like"/>
    <property type="match status" value="1"/>
</dbReference>
<dbReference type="SUPFAM" id="SSF81324">
    <property type="entry name" value="Voltage-gated potassium channels"/>
    <property type="match status" value="1"/>
</dbReference>
<dbReference type="PROSITE" id="PS50042">
    <property type="entry name" value="CNMP_BINDING_3"/>
    <property type="match status" value="1"/>
</dbReference>
<proteinExistence type="evidence at protein level"/>
<organism>
    <name type="scientific">Mus musculus</name>
    <name type="common">Mouse</name>
    <dbReference type="NCBI Taxonomy" id="10090"/>
    <lineage>
        <taxon>Eukaryota</taxon>
        <taxon>Metazoa</taxon>
        <taxon>Chordata</taxon>
        <taxon>Craniata</taxon>
        <taxon>Vertebrata</taxon>
        <taxon>Euteleostomi</taxon>
        <taxon>Mammalia</taxon>
        <taxon>Eutheria</taxon>
        <taxon>Euarchontoglires</taxon>
        <taxon>Glires</taxon>
        <taxon>Rodentia</taxon>
        <taxon>Myomorpha</taxon>
        <taxon>Muroidea</taxon>
        <taxon>Muridae</taxon>
        <taxon>Murinae</taxon>
        <taxon>Mus</taxon>
        <taxon>Mus</taxon>
    </lineage>
</organism>
<sequence>MEMEEISENLTASHSIKLTNMWLELLKSVFLSTPQDLPEIILILSLICTVGAFLNMHLKDFPIPLPVILFLIGCCFEILSFASTQIQIYADAIQWMDPDIFFGIFTPVIIFNVAFDMDIYMLQKLFWQILVITIPGFLINYTLILWYLQSVNKLSLKTVPWLLFSAVLISSDPMLTSASIRDLGLSRSLTNLINGESLLTSVLSLVIYSGVVHIRFKSKSVNHTLAHKVMSTAWSYIVESFITGIVFTKVIQLWMATIFGDDVNHITLIFSVLYLIFYVCELVGMSGIFTLATIGLFLNSTSFKPGVEAFLLEFWNCLSFIGFLMVFTFIGLLIPAHTYLHISFSDVYYSLNIYFTLIVLRLLVFLLMSPILSRLGHGFSWRWAFIMVWSEMKGTPNINMALLLAYSDISLGSERERSQILFHGVSVCVITLIVNRFILPMAVTKLGLRDVTSTKYKSVYYTFQHFQELTKSTAMALKFDKDLANADWNMVDNAIILQNPYAMNQEEITEHQKVKCPDCNKEIDETLNIEAMELTNRRLLSAQIASYQRQYRNEVLSQSAVQVLVGAAGSFGEKKGEYMSPENIKNFSESKKLLSFLRKLLLNWVYNTKKDKGVPSRYMFLHACHRIVFTNEFEYTGYLVVLMSTYPMIICWISRLKDIYDNEIKCANYYFLAFYILEALLKVAAMRKEFFSHTWLLFELGITLVGVLDIILIETDSISYNFDLTETVVFMNVIRLLRILRILKLVTPKLLQIIDKRMSQQISFRYSILKGYVQGEMDVLNIIDQIASSKQTKQILLKRVMRNMEHAMKELGYLEYDHPEIAVTMKTKEEINVMLNMAREIVKAFRSKGIIHKVEGTEINKLIMAKKIQVLDLQSVIQPFNVEEAPCNIPWLSEDPEAITFIQEKAKVVTFDCGNNIFEEGDEPEGIYVIISGMVKLKRSKPHLEMERVSAESEIKIHPLPHTEYLLSGEIIGELNCLTKERMQYSATCKTVVETYFIPISHLYEGFEKRCPNMKHKMWQKIGLAITAQKIREHLSFEDWNYKLQLKLCNAFIRDIPKSMKTDIYDETVTHVVLIHGSAEDCQLRKIYKAPFLIPVTCHQIQGMEDFTKVMIIQTSIAVRKFRWNVRKYIPPRRISMKPDSERESFETLDETSEEDNGKKENQENEELIEENINI</sequence>
<gene>
    <name type="primary">Slc9c1</name>
    <name type="synonym">Gm610</name>
    <name type="synonym">Slc9a10</name>
</gene>
<protein>
    <recommendedName>
        <fullName>Solute carrier family 9 member C1</fullName>
    </recommendedName>
    <alternativeName>
        <fullName>Na(+)/H(+) exchanger 10</fullName>
        <shortName>NHE-10</shortName>
    </alternativeName>
    <alternativeName>
        <fullName>Sodium/hydrogen exchanger 10</fullName>
    </alternativeName>
    <alternativeName>
        <fullName>Solute carrier family 10 member 10</fullName>
    </alternativeName>
    <alternativeName>
        <fullName>Sperm-specific Na(+)/H(+) exchanger</fullName>
        <shortName>sNHE</shortName>
    </alternativeName>
</protein>
<evidence type="ECO:0000250" key="1">
    <source>
        <dbReference type="UniProtKB" id="A3RL54"/>
    </source>
</evidence>
<evidence type="ECO:0000255" key="2"/>
<evidence type="ECO:0000256" key="3">
    <source>
        <dbReference type="SAM" id="MobiDB-lite"/>
    </source>
</evidence>
<evidence type="ECO:0000269" key="4">
    <source>
    </source>
</evidence>
<evidence type="ECO:0000269" key="5">
    <source>
    </source>
</evidence>
<evidence type="ECO:0000269" key="6">
    <source>
    </source>
</evidence>
<evidence type="ECO:0000305" key="7"/>
<reference key="1">
    <citation type="journal article" date="2003" name="Nat. Cell Biol.">
        <title>A new sperm-specific Na+/H+ exchanger required for sperm motility and fertility.</title>
        <authorList>
            <person name="Wang D."/>
            <person name="King S.M."/>
            <person name="Quill T.A."/>
            <person name="Doolittle L.K."/>
            <person name="Garbers D.L."/>
        </authorList>
    </citation>
    <scope>NUCLEOTIDE SEQUENCE [MRNA]</scope>
    <scope>FUNCTION</scope>
    <scope>SUBCELLULAR LOCATION</scope>
    <scope>TISSUE SPECIFICITY</scope>
    <scope>DISRUPTION PHENOTYPE</scope>
    <source>
        <strain>129/SvEv</strain>
    </source>
</reference>
<reference key="2">
    <citation type="journal article" date="2009" name="PLoS Biol.">
        <title>Lineage-specific biology revealed by a finished genome assembly of the mouse.</title>
        <authorList>
            <person name="Church D.M."/>
            <person name="Goodstadt L."/>
            <person name="Hillier L.W."/>
            <person name="Zody M.C."/>
            <person name="Goldstein S."/>
            <person name="She X."/>
            <person name="Bult C.J."/>
            <person name="Agarwala R."/>
            <person name="Cherry J.L."/>
            <person name="DiCuccio M."/>
            <person name="Hlavina W."/>
            <person name="Kapustin Y."/>
            <person name="Meric P."/>
            <person name="Maglott D."/>
            <person name="Birtle Z."/>
            <person name="Marques A.C."/>
            <person name="Graves T."/>
            <person name="Zhou S."/>
            <person name="Teague B."/>
            <person name="Potamousis K."/>
            <person name="Churas C."/>
            <person name="Place M."/>
            <person name="Herschleb J."/>
            <person name="Runnheim R."/>
            <person name="Forrest D."/>
            <person name="Amos-Landgraf J."/>
            <person name="Schwartz D.C."/>
            <person name="Cheng Z."/>
            <person name="Lindblad-Toh K."/>
            <person name="Eichler E.E."/>
            <person name="Ponting C.P."/>
        </authorList>
    </citation>
    <scope>NUCLEOTIDE SEQUENCE [LARGE SCALE GENOMIC DNA]</scope>
    <source>
        <strain>C57BL/6J</strain>
    </source>
</reference>
<reference key="3">
    <citation type="journal article" date="2003" name="BMC Genomics">
        <title>Gene discovery in the hamster: a comparative genomics approach for gene annotation by sequencing of hamster testis cDNAs.</title>
        <authorList>
            <person name="Oduru S."/>
            <person name="Campbell J.L."/>
            <person name="Karri S."/>
            <person name="Hendry W.J."/>
            <person name="Khan S.A."/>
            <person name="Williams S.C."/>
        </authorList>
    </citation>
    <scope>IDENTIFICATION</scope>
</reference>
<reference key="4">
    <citation type="journal article" date="2007" name="Proc. Natl. Acad. Sci. U.S.A.">
        <title>A sperm-specific Na+/H+ exchanger (sNHE) is critical for expression and in vivo bicarbonate regulation of the soluble adenylyl cyclase (sAC).</title>
        <authorList>
            <person name="Wang D."/>
            <person name="Hu J."/>
            <person name="Bobulescu I.A."/>
            <person name="Quill T.A."/>
            <person name="McLeroy P."/>
            <person name="Moe O.W."/>
            <person name="Garbers D.L."/>
        </authorList>
    </citation>
    <scope>FUNCTION</scope>
    <scope>INTERACTION WITH SAC</scope>
</reference>
<reference key="5">
    <citation type="journal article" date="2023" name="Nat. Commun.">
        <title>Control of intracellular pH and bicarbonate by CO2 diffusion into human sperm.</title>
        <authorList>
            <person name="Grahn E."/>
            <person name="Kaufmann S.V."/>
            <person name="Askarova M."/>
            <person name="Ninov M."/>
            <person name="Welp L.M."/>
            <person name="Berger T.K."/>
            <person name="Urlaub H."/>
            <person name="Kaupp U.B."/>
        </authorList>
    </citation>
    <scope>CAUTION</scope>
</reference>
<accession>Q6UJY2</accession>
<accession>E0CX34</accession>
<accession>Q7M6Y7</accession>
<name>SL9C1_MOUSE</name>
<feature type="chain" id="PRO_0000295705" description="Solute carrier family 9 member C1">
    <location>
        <begin position="1"/>
        <end position="1175"/>
    </location>
</feature>
<feature type="topological domain" description="Extracellular" evidence="7">
    <location>
        <begin position="1"/>
        <end position="39"/>
    </location>
</feature>
<feature type="transmembrane region" description="Helical; Name=TM1" evidence="1">
    <location>
        <begin position="40"/>
        <end position="59"/>
    </location>
</feature>
<feature type="topological domain" description="Cytoplasmic" evidence="7">
    <location>
        <begin position="60"/>
        <end position="64"/>
    </location>
</feature>
<feature type="transmembrane region" description="Helical; Name=TM2" evidence="1">
    <location>
        <begin position="65"/>
        <end position="82"/>
    </location>
</feature>
<feature type="topological domain" description="Extracellular" evidence="7">
    <location>
        <begin position="83"/>
        <end position="98"/>
    </location>
</feature>
<feature type="transmembrane region" description="Helical; Name=TM3" evidence="1">
    <location>
        <begin position="99"/>
        <end position="115"/>
    </location>
</feature>
<feature type="topological domain" description="Cytoplasmic" evidence="7">
    <location>
        <begin position="116"/>
        <end position="125"/>
    </location>
</feature>
<feature type="transmembrane region" description="Helical; Name=TM4" evidence="1">
    <location>
        <begin position="126"/>
        <end position="151"/>
    </location>
</feature>
<feature type="topological domain" description="Extracellular" evidence="7">
    <location>
        <begin position="152"/>
        <end position="157"/>
    </location>
</feature>
<feature type="transmembrane region" description="Helical; Name=TM5" evidence="1">
    <location>
        <begin position="158"/>
        <end position="183"/>
    </location>
</feature>
<feature type="topological domain" description="Cytoplasmic" evidence="7">
    <location>
        <begin position="184"/>
        <end position="186"/>
    </location>
</feature>
<feature type="transmembrane region" description="Helical; Name=TM6" evidence="1">
    <location>
        <begin position="187"/>
        <end position="212"/>
    </location>
</feature>
<feature type="topological domain" description="Extracellular" evidence="7">
    <location>
        <begin position="213"/>
        <end position="225"/>
    </location>
</feature>
<feature type="transmembrane region" description="Helical; Name=TM7, linker" evidence="1">
    <location>
        <begin position="226"/>
        <end position="257"/>
    </location>
</feature>
<feature type="topological domain" description="Cytoplasmic" evidence="7">
    <location>
        <begin position="258"/>
        <end position="261"/>
    </location>
</feature>
<feature type="transmembrane region" description="Helical; Name=TM8" evidence="1">
    <location>
        <begin position="262"/>
        <end position="283"/>
    </location>
</feature>
<feature type="topological domain" description="Extracellular" evidence="7">
    <location>
        <begin position="284"/>
        <end position="286"/>
    </location>
</feature>
<feature type="transmembrane region" description="Helical; Name=TM9" evidence="1">
    <location>
        <begin position="287"/>
        <end position="300"/>
    </location>
</feature>
<feature type="topological domain" description="Cytoplasmic" evidence="7">
    <location>
        <begin position="301"/>
        <end position="307"/>
    </location>
</feature>
<feature type="transmembrane region" description="Helical; Name=TM10" evidence="1">
    <location>
        <begin position="308"/>
        <end position="339"/>
    </location>
</feature>
<feature type="topological domain" description="Extracellular" evidence="7">
    <location>
        <begin position="340"/>
        <end position="344"/>
    </location>
</feature>
<feature type="transmembrane region" description="Helical; Name=TM11" evidence="1">
    <location>
        <begin position="345"/>
        <end position="374"/>
    </location>
</feature>
<feature type="topological domain" description="Cytoplasmic" evidence="7">
    <location>
        <begin position="375"/>
        <end position="380"/>
    </location>
</feature>
<feature type="transmembrane region" description="Helical; Name=TM12" evidence="1">
    <location>
        <begin position="381"/>
        <end position="411"/>
    </location>
</feature>
<feature type="topological domain" description="Extracellular" evidence="7">
    <location>
        <begin position="412"/>
        <end position="415"/>
    </location>
</feature>
<feature type="transmembrane region" description="Helical; Name=TM13" evidence="1">
    <location>
        <begin position="416"/>
        <end position="446"/>
    </location>
</feature>
<feature type="topological domain" description="Cytoplasmic" evidence="7">
    <location>
        <begin position="447"/>
        <end position="632"/>
    </location>
</feature>
<feature type="transmembrane region" description="Helical; Name=S1" evidence="1">
    <location>
        <begin position="633"/>
        <end position="653"/>
    </location>
</feature>
<feature type="topological domain" description="Extracellular" evidence="7">
    <location>
        <begin position="654"/>
        <end position="657"/>
    </location>
</feature>
<feature type="transmembrane region" description="Helical; Name=S2" evidence="1">
    <location>
        <begin position="658"/>
        <end position="684"/>
    </location>
</feature>
<feature type="topological domain" description="Cytoplasmic" evidence="7">
    <location>
        <begin position="685"/>
        <end position="691"/>
    </location>
</feature>
<feature type="transmembrane region" description="Helical; Name=S3" evidence="1">
    <location>
        <begin position="692"/>
        <end position="716"/>
    </location>
</feature>
<feature type="topological domain" description="Extracellular" evidence="7">
    <location>
        <begin position="717"/>
        <end position="724"/>
    </location>
</feature>
<feature type="transmembrane region" description="Helical; Name=S4" evidence="1">
    <location>
        <begin position="725"/>
        <end position="751"/>
    </location>
</feature>
<feature type="topological domain" description="Cytoplasmic" evidence="7">
    <location>
        <begin position="752"/>
        <end position="1175"/>
    </location>
</feature>
<feature type="region of interest" description="Transport core domain" evidence="1">
    <location>
        <begin position="126"/>
        <end position="213"/>
    </location>
</feature>
<feature type="region of interest" description="Transport core domain" evidence="1">
    <location>
        <begin position="345"/>
        <end position="446"/>
    </location>
</feature>
<feature type="region of interest" description="Ion transport-like">
    <location>
        <begin position="618"/>
        <end position="698"/>
    </location>
</feature>
<feature type="region of interest" description="Disordered" evidence="3">
    <location>
        <begin position="1137"/>
        <end position="1175"/>
    </location>
</feature>
<feature type="compositionally biased region" description="Basic and acidic residues" evidence="3">
    <location>
        <begin position="1137"/>
        <end position="1146"/>
    </location>
</feature>
<feature type="compositionally biased region" description="Acidic residues" evidence="3">
    <location>
        <begin position="1164"/>
        <end position="1175"/>
    </location>
</feature>
<feature type="sequence conflict" description="In Ref. 1; AAQ88278." evidence="7" ref="1">
    <original>M</original>
    <variation>T</variation>
    <location>
        <position position="3"/>
    </location>
</feature>
<feature type="sequence conflict" description="In Ref. 1; AAQ88278." evidence="7" ref="1">
    <original>M</original>
    <variation>L</variation>
    <location>
        <position position="503"/>
    </location>
</feature>
<feature type="sequence conflict" description="In Ref. 1; AAQ88278." evidence="7" ref="1">
    <original>N</original>
    <variation>T</variation>
    <location>
        <position position="520"/>
    </location>
</feature>
<feature type="sequence conflict" description="In Ref. 1; AAQ88278." evidence="7" ref="1">
    <original>V</original>
    <variation>I</variation>
    <location>
        <position position="707"/>
    </location>
</feature>
<feature type="sequence conflict" description="In Ref. 1; AAQ88278." evidence="7" ref="1">
    <original>A</original>
    <variation>T</variation>
    <location>
        <position position="844"/>
    </location>
</feature>
<feature type="sequence conflict" description="In Ref. 1; AAQ88278." evidence="7" ref="1">
    <original>Y</original>
    <variation>F</variation>
    <location>
        <position position="1129"/>
    </location>
</feature>